<dbReference type="EMBL" id="AL646052">
    <property type="protein sequence ID" value="CAD16719.1"/>
    <property type="molecule type" value="Genomic_DNA"/>
</dbReference>
<dbReference type="RefSeq" id="WP_011002910.1">
    <property type="nucleotide sequence ID" value="NC_003295.1"/>
</dbReference>
<dbReference type="SMR" id="Q8XV21"/>
<dbReference type="STRING" id="267608.RSc3010"/>
<dbReference type="EnsemblBacteria" id="CAD16719">
    <property type="protein sequence ID" value="CAD16719"/>
    <property type="gene ID" value="RSc3010"/>
</dbReference>
<dbReference type="KEGG" id="rso:RSc3010"/>
<dbReference type="eggNOG" id="COG0186">
    <property type="taxonomic scope" value="Bacteria"/>
</dbReference>
<dbReference type="HOGENOM" id="CLU_073626_1_1_4"/>
<dbReference type="Proteomes" id="UP000001436">
    <property type="component" value="Chromosome"/>
</dbReference>
<dbReference type="GO" id="GO:0022627">
    <property type="term" value="C:cytosolic small ribosomal subunit"/>
    <property type="evidence" value="ECO:0007669"/>
    <property type="project" value="TreeGrafter"/>
</dbReference>
<dbReference type="GO" id="GO:0019843">
    <property type="term" value="F:rRNA binding"/>
    <property type="evidence" value="ECO:0007669"/>
    <property type="project" value="UniProtKB-UniRule"/>
</dbReference>
<dbReference type="GO" id="GO:0003735">
    <property type="term" value="F:structural constituent of ribosome"/>
    <property type="evidence" value="ECO:0007669"/>
    <property type="project" value="InterPro"/>
</dbReference>
<dbReference type="GO" id="GO:0006412">
    <property type="term" value="P:translation"/>
    <property type="evidence" value="ECO:0007669"/>
    <property type="project" value="UniProtKB-UniRule"/>
</dbReference>
<dbReference type="CDD" id="cd00364">
    <property type="entry name" value="Ribosomal_uS17"/>
    <property type="match status" value="1"/>
</dbReference>
<dbReference type="Gene3D" id="2.40.50.140">
    <property type="entry name" value="Nucleic acid-binding proteins"/>
    <property type="match status" value="1"/>
</dbReference>
<dbReference type="HAMAP" id="MF_01345_B">
    <property type="entry name" value="Ribosomal_uS17_B"/>
    <property type="match status" value="1"/>
</dbReference>
<dbReference type="InterPro" id="IPR012340">
    <property type="entry name" value="NA-bd_OB-fold"/>
</dbReference>
<dbReference type="InterPro" id="IPR000266">
    <property type="entry name" value="Ribosomal_uS17"/>
</dbReference>
<dbReference type="InterPro" id="IPR019984">
    <property type="entry name" value="Ribosomal_uS17_bact/chlr"/>
</dbReference>
<dbReference type="InterPro" id="IPR019979">
    <property type="entry name" value="Ribosomal_uS17_CS"/>
</dbReference>
<dbReference type="NCBIfam" id="NF004123">
    <property type="entry name" value="PRK05610.1"/>
    <property type="match status" value="1"/>
</dbReference>
<dbReference type="NCBIfam" id="TIGR03635">
    <property type="entry name" value="uS17_bact"/>
    <property type="match status" value="1"/>
</dbReference>
<dbReference type="PANTHER" id="PTHR10744">
    <property type="entry name" value="40S RIBOSOMAL PROTEIN S11 FAMILY MEMBER"/>
    <property type="match status" value="1"/>
</dbReference>
<dbReference type="PANTHER" id="PTHR10744:SF1">
    <property type="entry name" value="SMALL RIBOSOMAL SUBUNIT PROTEIN US17M"/>
    <property type="match status" value="1"/>
</dbReference>
<dbReference type="Pfam" id="PF00366">
    <property type="entry name" value="Ribosomal_S17"/>
    <property type="match status" value="1"/>
</dbReference>
<dbReference type="PRINTS" id="PR00973">
    <property type="entry name" value="RIBOSOMALS17"/>
</dbReference>
<dbReference type="SUPFAM" id="SSF50249">
    <property type="entry name" value="Nucleic acid-binding proteins"/>
    <property type="match status" value="1"/>
</dbReference>
<dbReference type="PROSITE" id="PS00056">
    <property type="entry name" value="RIBOSOMAL_S17"/>
    <property type="match status" value="1"/>
</dbReference>
<gene>
    <name evidence="1" type="primary">rpsQ</name>
    <name type="ordered locus">RSc3010</name>
    <name type="ORF">RS01078</name>
</gene>
<feature type="chain" id="PRO_0000233551" description="Small ribosomal subunit protein uS17">
    <location>
        <begin position="1"/>
        <end position="89"/>
    </location>
</feature>
<proteinExistence type="inferred from homology"/>
<reference key="1">
    <citation type="journal article" date="2002" name="Nature">
        <title>Genome sequence of the plant pathogen Ralstonia solanacearum.</title>
        <authorList>
            <person name="Salanoubat M."/>
            <person name="Genin S."/>
            <person name="Artiguenave F."/>
            <person name="Gouzy J."/>
            <person name="Mangenot S."/>
            <person name="Arlat M."/>
            <person name="Billault A."/>
            <person name="Brottier P."/>
            <person name="Camus J.-C."/>
            <person name="Cattolico L."/>
            <person name="Chandler M."/>
            <person name="Choisne N."/>
            <person name="Claudel-Renard C."/>
            <person name="Cunnac S."/>
            <person name="Demange N."/>
            <person name="Gaspin C."/>
            <person name="Lavie M."/>
            <person name="Moisan A."/>
            <person name="Robert C."/>
            <person name="Saurin W."/>
            <person name="Schiex T."/>
            <person name="Siguier P."/>
            <person name="Thebault P."/>
            <person name="Whalen M."/>
            <person name="Wincker P."/>
            <person name="Levy M."/>
            <person name="Weissenbach J."/>
            <person name="Boucher C.A."/>
        </authorList>
    </citation>
    <scope>NUCLEOTIDE SEQUENCE [LARGE SCALE GENOMIC DNA]</scope>
    <source>
        <strain>ATCC BAA-1114 / GMI1000</strain>
    </source>
</reference>
<organism>
    <name type="scientific">Ralstonia nicotianae (strain ATCC BAA-1114 / GMI1000)</name>
    <name type="common">Ralstonia solanacearum</name>
    <dbReference type="NCBI Taxonomy" id="267608"/>
    <lineage>
        <taxon>Bacteria</taxon>
        <taxon>Pseudomonadati</taxon>
        <taxon>Pseudomonadota</taxon>
        <taxon>Betaproteobacteria</taxon>
        <taxon>Burkholderiales</taxon>
        <taxon>Burkholderiaceae</taxon>
        <taxon>Ralstonia</taxon>
        <taxon>Ralstonia solanacearum species complex</taxon>
    </lineage>
</organism>
<comment type="function">
    <text evidence="1">One of the primary rRNA binding proteins, it binds specifically to the 5'-end of 16S ribosomal RNA.</text>
</comment>
<comment type="subunit">
    <text evidence="1">Part of the 30S ribosomal subunit.</text>
</comment>
<comment type="similarity">
    <text evidence="1">Belongs to the universal ribosomal protein uS17 family.</text>
</comment>
<evidence type="ECO:0000255" key="1">
    <source>
        <dbReference type="HAMAP-Rule" id="MF_01345"/>
    </source>
</evidence>
<evidence type="ECO:0000305" key="2"/>
<accession>Q8XV21</accession>
<protein>
    <recommendedName>
        <fullName evidence="1">Small ribosomal subunit protein uS17</fullName>
    </recommendedName>
    <alternativeName>
        <fullName evidence="2">30S ribosomal protein S17</fullName>
    </alternativeName>
</protein>
<name>RS17_RALN1</name>
<sequence>MTEAATSLKRTLVGRVVSSKMDKTVTVLVENRVKHPLYGKYVVRSKKYHAHDEANQYKEGDRVEIVESRPISRTKAWVVSRLVEAARVI</sequence>
<keyword id="KW-1185">Reference proteome</keyword>
<keyword id="KW-0687">Ribonucleoprotein</keyword>
<keyword id="KW-0689">Ribosomal protein</keyword>
<keyword id="KW-0694">RNA-binding</keyword>
<keyword id="KW-0699">rRNA-binding</keyword>